<gene>
    <name evidence="1" type="primary">rplK</name>
    <name type="ordered locus">RT0125</name>
</gene>
<sequence>MSQKTIKGYINLIIPAAGATPAPPIGPALGQRKVNIAAFCKDFNDATNGMEKGVPLPTVITVYDDNSFSFKVKTPPASYFLKKYAKITKGSSATKKEAMVGKVTLDACREIAKLKISDLNTKNIEAATKIICGSAASMGLEVVGN</sequence>
<keyword id="KW-0488">Methylation</keyword>
<keyword id="KW-0687">Ribonucleoprotein</keyword>
<keyword id="KW-0689">Ribosomal protein</keyword>
<keyword id="KW-0694">RNA-binding</keyword>
<keyword id="KW-0699">rRNA-binding</keyword>
<organism>
    <name type="scientific">Rickettsia typhi (strain ATCC VR-144 / Wilmington)</name>
    <dbReference type="NCBI Taxonomy" id="257363"/>
    <lineage>
        <taxon>Bacteria</taxon>
        <taxon>Pseudomonadati</taxon>
        <taxon>Pseudomonadota</taxon>
        <taxon>Alphaproteobacteria</taxon>
        <taxon>Rickettsiales</taxon>
        <taxon>Rickettsiaceae</taxon>
        <taxon>Rickettsieae</taxon>
        <taxon>Rickettsia</taxon>
        <taxon>typhus group</taxon>
    </lineage>
</organism>
<comment type="function">
    <text evidence="1">Forms part of the ribosomal stalk which helps the ribosome interact with GTP-bound translation factors.</text>
</comment>
<comment type="subunit">
    <text evidence="1">Part of the ribosomal stalk of the 50S ribosomal subunit. Interacts with L10 and the large rRNA to form the base of the stalk. L10 forms an elongated spine to which L12 dimers bind in a sequential fashion forming a multimeric L10(L12)X complex.</text>
</comment>
<comment type="PTM">
    <text evidence="1">One or more lysine residues are methylated.</text>
</comment>
<comment type="similarity">
    <text evidence="1">Belongs to the universal ribosomal protein uL11 family.</text>
</comment>
<name>RL11_RICTY</name>
<dbReference type="EMBL" id="AE017197">
    <property type="protein sequence ID" value="AAU03610.1"/>
    <property type="molecule type" value="Genomic_DNA"/>
</dbReference>
<dbReference type="RefSeq" id="WP_011190597.1">
    <property type="nucleotide sequence ID" value="NC_006142.1"/>
</dbReference>
<dbReference type="SMR" id="Q68XN2"/>
<dbReference type="KEGG" id="rty:RT0125"/>
<dbReference type="eggNOG" id="COG0080">
    <property type="taxonomic scope" value="Bacteria"/>
</dbReference>
<dbReference type="HOGENOM" id="CLU_074237_2_0_5"/>
<dbReference type="OrthoDB" id="9802408at2"/>
<dbReference type="Proteomes" id="UP000000604">
    <property type="component" value="Chromosome"/>
</dbReference>
<dbReference type="GO" id="GO:0022625">
    <property type="term" value="C:cytosolic large ribosomal subunit"/>
    <property type="evidence" value="ECO:0007669"/>
    <property type="project" value="TreeGrafter"/>
</dbReference>
<dbReference type="GO" id="GO:0070180">
    <property type="term" value="F:large ribosomal subunit rRNA binding"/>
    <property type="evidence" value="ECO:0007669"/>
    <property type="project" value="UniProtKB-UniRule"/>
</dbReference>
<dbReference type="GO" id="GO:0003735">
    <property type="term" value="F:structural constituent of ribosome"/>
    <property type="evidence" value="ECO:0007669"/>
    <property type="project" value="InterPro"/>
</dbReference>
<dbReference type="GO" id="GO:0006412">
    <property type="term" value="P:translation"/>
    <property type="evidence" value="ECO:0007669"/>
    <property type="project" value="UniProtKB-UniRule"/>
</dbReference>
<dbReference type="CDD" id="cd00349">
    <property type="entry name" value="Ribosomal_L11"/>
    <property type="match status" value="1"/>
</dbReference>
<dbReference type="FunFam" id="3.30.1550.10:FF:000005">
    <property type="entry name" value="50S ribosomal protein L11"/>
    <property type="match status" value="1"/>
</dbReference>
<dbReference type="Gene3D" id="1.10.10.250">
    <property type="entry name" value="Ribosomal protein L11, C-terminal domain"/>
    <property type="match status" value="1"/>
</dbReference>
<dbReference type="Gene3D" id="3.30.1550.10">
    <property type="entry name" value="Ribosomal protein L11/L12, N-terminal domain"/>
    <property type="match status" value="1"/>
</dbReference>
<dbReference type="HAMAP" id="MF_00736">
    <property type="entry name" value="Ribosomal_uL11"/>
    <property type="match status" value="1"/>
</dbReference>
<dbReference type="InterPro" id="IPR000911">
    <property type="entry name" value="Ribosomal_uL11"/>
</dbReference>
<dbReference type="InterPro" id="IPR006519">
    <property type="entry name" value="Ribosomal_uL11_bac-typ"/>
</dbReference>
<dbReference type="InterPro" id="IPR020783">
    <property type="entry name" value="Ribosomal_uL11_C"/>
</dbReference>
<dbReference type="InterPro" id="IPR036769">
    <property type="entry name" value="Ribosomal_uL11_C_sf"/>
</dbReference>
<dbReference type="InterPro" id="IPR020785">
    <property type="entry name" value="Ribosomal_uL11_CS"/>
</dbReference>
<dbReference type="InterPro" id="IPR020784">
    <property type="entry name" value="Ribosomal_uL11_N"/>
</dbReference>
<dbReference type="InterPro" id="IPR036796">
    <property type="entry name" value="Ribosomal_uL11_N_sf"/>
</dbReference>
<dbReference type="NCBIfam" id="TIGR01632">
    <property type="entry name" value="L11_bact"/>
    <property type="match status" value="1"/>
</dbReference>
<dbReference type="PANTHER" id="PTHR11661">
    <property type="entry name" value="60S RIBOSOMAL PROTEIN L12"/>
    <property type="match status" value="1"/>
</dbReference>
<dbReference type="PANTHER" id="PTHR11661:SF1">
    <property type="entry name" value="LARGE RIBOSOMAL SUBUNIT PROTEIN UL11M"/>
    <property type="match status" value="1"/>
</dbReference>
<dbReference type="Pfam" id="PF00298">
    <property type="entry name" value="Ribosomal_L11"/>
    <property type="match status" value="1"/>
</dbReference>
<dbReference type="Pfam" id="PF03946">
    <property type="entry name" value="Ribosomal_L11_N"/>
    <property type="match status" value="1"/>
</dbReference>
<dbReference type="SMART" id="SM00649">
    <property type="entry name" value="RL11"/>
    <property type="match status" value="1"/>
</dbReference>
<dbReference type="SUPFAM" id="SSF54747">
    <property type="entry name" value="Ribosomal L11/L12e N-terminal domain"/>
    <property type="match status" value="1"/>
</dbReference>
<dbReference type="SUPFAM" id="SSF46906">
    <property type="entry name" value="Ribosomal protein L11, C-terminal domain"/>
    <property type="match status" value="1"/>
</dbReference>
<dbReference type="PROSITE" id="PS00359">
    <property type="entry name" value="RIBOSOMAL_L11"/>
    <property type="match status" value="1"/>
</dbReference>
<evidence type="ECO:0000255" key="1">
    <source>
        <dbReference type="HAMAP-Rule" id="MF_00736"/>
    </source>
</evidence>
<evidence type="ECO:0000305" key="2"/>
<proteinExistence type="inferred from homology"/>
<reference key="1">
    <citation type="journal article" date="2004" name="J. Bacteriol.">
        <title>Complete genome sequence of Rickettsia typhi and comparison with sequences of other Rickettsiae.</title>
        <authorList>
            <person name="McLeod M.P."/>
            <person name="Qin X."/>
            <person name="Karpathy S.E."/>
            <person name="Gioia J."/>
            <person name="Highlander S.K."/>
            <person name="Fox G.E."/>
            <person name="McNeill T.Z."/>
            <person name="Jiang H."/>
            <person name="Muzny D."/>
            <person name="Jacob L.S."/>
            <person name="Hawes A.C."/>
            <person name="Sodergren E."/>
            <person name="Gill R."/>
            <person name="Hume J."/>
            <person name="Morgan M."/>
            <person name="Fan G."/>
            <person name="Amin A.G."/>
            <person name="Gibbs R.A."/>
            <person name="Hong C."/>
            <person name="Yu X.-J."/>
            <person name="Walker D.H."/>
            <person name="Weinstock G.M."/>
        </authorList>
    </citation>
    <scope>NUCLEOTIDE SEQUENCE [LARGE SCALE GENOMIC DNA]</scope>
    <source>
        <strain>ATCC VR-144 / Wilmington</strain>
    </source>
</reference>
<accession>Q68XN2</accession>
<protein>
    <recommendedName>
        <fullName evidence="1">Large ribosomal subunit protein uL11</fullName>
    </recommendedName>
    <alternativeName>
        <fullName evidence="2">50S ribosomal protein L11</fullName>
    </alternativeName>
</protein>
<feature type="chain" id="PRO_0000104353" description="Large ribosomal subunit protein uL11">
    <location>
        <begin position="1"/>
        <end position="145"/>
    </location>
</feature>